<proteinExistence type="inferred from homology"/>
<organism>
    <name type="scientific">Ehrlichia canis (strain Jake)</name>
    <dbReference type="NCBI Taxonomy" id="269484"/>
    <lineage>
        <taxon>Bacteria</taxon>
        <taxon>Pseudomonadati</taxon>
        <taxon>Pseudomonadota</taxon>
        <taxon>Alphaproteobacteria</taxon>
        <taxon>Rickettsiales</taxon>
        <taxon>Anaplasmataceae</taxon>
        <taxon>Ehrlichia</taxon>
    </lineage>
</organism>
<keyword id="KW-0560">Oxidoreductase</keyword>
<keyword id="KW-0819">tRNA processing</keyword>
<feature type="chain" id="PRO_0000242920" description="tRNA uridine(34) hydroxylase">
    <location>
        <begin position="1"/>
        <end position="274"/>
    </location>
</feature>
<feature type="domain" description="Rhodanese" evidence="1">
    <location>
        <begin position="121"/>
        <end position="217"/>
    </location>
</feature>
<feature type="active site" description="Cysteine persulfide intermediate" evidence="1">
    <location>
        <position position="177"/>
    </location>
</feature>
<reference key="1">
    <citation type="journal article" date="2006" name="J. Bacteriol.">
        <title>The genome of the obligately intracellular bacterium Ehrlichia canis reveals themes of complex membrane structure and immune evasion strategies.</title>
        <authorList>
            <person name="Mavromatis K."/>
            <person name="Doyle C.K."/>
            <person name="Lykidis A."/>
            <person name="Ivanova N."/>
            <person name="Francino M.P."/>
            <person name="Chain P."/>
            <person name="Shin M."/>
            <person name="Malfatti S."/>
            <person name="Larimer F."/>
            <person name="Copeland A."/>
            <person name="Detter J.C."/>
            <person name="Land M."/>
            <person name="Richardson P.M."/>
            <person name="Yu X.J."/>
            <person name="Walker D.H."/>
            <person name="McBride J.W."/>
            <person name="Kyrpides N.C."/>
        </authorList>
    </citation>
    <scope>NUCLEOTIDE SEQUENCE [LARGE SCALE GENOMIC DNA]</scope>
    <source>
        <strain>Jake</strain>
    </source>
</reference>
<evidence type="ECO:0000255" key="1">
    <source>
        <dbReference type="HAMAP-Rule" id="MF_00469"/>
    </source>
</evidence>
<protein>
    <recommendedName>
        <fullName evidence="1">tRNA uridine(34) hydroxylase</fullName>
        <ecNumber evidence="1">1.14.-.-</ecNumber>
    </recommendedName>
    <alternativeName>
        <fullName evidence="1">tRNA hydroxylation protein O</fullName>
    </alternativeName>
</protein>
<dbReference type="EC" id="1.14.-.-" evidence="1"/>
<dbReference type="EMBL" id="CP000107">
    <property type="protein sequence ID" value="AAZ68256.1"/>
    <property type="molecule type" value="Genomic_DNA"/>
</dbReference>
<dbReference type="RefSeq" id="WP_011304334.1">
    <property type="nucleotide sequence ID" value="NC_007354.1"/>
</dbReference>
<dbReference type="SMR" id="Q3YSP9"/>
<dbReference type="FunCoup" id="Q3YSP9">
    <property type="interactions" value="192"/>
</dbReference>
<dbReference type="STRING" id="269484.Ecaj_0206"/>
<dbReference type="KEGG" id="ecn:Ecaj_0206"/>
<dbReference type="eggNOG" id="COG1054">
    <property type="taxonomic scope" value="Bacteria"/>
</dbReference>
<dbReference type="HOGENOM" id="CLU_038878_0_1_5"/>
<dbReference type="InParanoid" id="Q3YSP9"/>
<dbReference type="Proteomes" id="UP000000435">
    <property type="component" value="Chromosome"/>
</dbReference>
<dbReference type="GO" id="GO:0016705">
    <property type="term" value="F:oxidoreductase activity, acting on paired donors, with incorporation or reduction of molecular oxygen"/>
    <property type="evidence" value="ECO:0007669"/>
    <property type="project" value="UniProtKB-UniRule"/>
</dbReference>
<dbReference type="GO" id="GO:0006400">
    <property type="term" value="P:tRNA modification"/>
    <property type="evidence" value="ECO:0007669"/>
    <property type="project" value="UniProtKB-UniRule"/>
</dbReference>
<dbReference type="CDD" id="cd01518">
    <property type="entry name" value="RHOD_YceA"/>
    <property type="match status" value="1"/>
</dbReference>
<dbReference type="Gene3D" id="3.30.70.100">
    <property type="match status" value="1"/>
</dbReference>
<dbReference type="Gene3D" id="3.40.250.10">
    <property type="entry name" value="Rhodanese-like domain"/>
    <property type="match status" value="1"/>
</dbReference>
<dbReference type="HAMAP" id="MF_00469">
    <property type="entry name" value="TrhO"/>
    <property type="match status" value="1"/>
</dbReference>
<dbReference type="InterPro" id="IPR001763">
    <property type="entry name" value="Rhodanese-like_dom"/>
</dbReference>
<dbReference type="InterPro" id="IPR036873">
    <property type="entry name" value="Rhodanese-like_dom_sf"/>
</dbReference>
<dbReference type="InterPro" id="IPR020936">
    <property type="entry name" value="TrhO"/>
</dbReference>
<dbReference type="InterPro" id="IPR040503">
    <property type="entry name" value="TRHO_N"/>
</dbReference>
<dbReference type="NCBIfam" id="NF001136">
    <property type="entry name" value="PRK00142.1-4"/>
    <property type="match status" value="1"/>
</dbReference>
<dbReference type="PANTHER" id="PTHR43268:SF3">
    <property type="entry name" value="RHODANESE-LIKE DOMAIN-CONTAINING PROTEIN 7-RELATED"/>
    <property type="match status" value="1"/>
</dbReference>
<dbReference type="PANTHER" id="PTHR43268">
    <property type="entry name" value="THIOSULFATE SULFURTRANSFERASE/RHODANESE-LIKE DOMAIN-CONTAINING PROTEIN 2"/>
    <property type="match status" value="1"/>
</dbReference>
<dbReference type="Pfam" id="PF00581">
    <property type="entry name" value="Rhodanese"/>
    <property type="match status" value="1"/>
</dbReference>
<dbReference type="Pfam" id="PF17773">
    <property type="entry name" value="UPF0176_N"/>
    <property type="match status" value="1"/>
</dbReference>
<dbReference type="SMART" id="SM00450">
    <property type="entry name" value="RHOD"/>
    <property type="match status" value="1"/>
</dbReference>
<dbReference type="SUPFAM" id="SSF52821">
    <property type="entry name" value="Rhodanese/Cell cycle control phosphatase"/>
    <property type="match status" value="1"/>
</dbReference>
<dbReference type="PROSITE" id="PS50206">
    <property type="entry name" value="RHODANESE_3"/>
    <property type="match status" value="1"/>
</dbReference>
<sequence length="274" mass="31493">MGYVVSTFYRFVHLSNYYDIQSVLKEFCVQHDIKGTIILAEQGINATIAGAQSALNQFFSFLDLDNRLKDIQHHESFSTHNPFSKMKVKLRNELVRLGIENFDNSVCGEYVSPQNWDDLISRSDVYTIDTRNTYEINFGKFKNAINPQTKCFRDFPEWAVSWASDKVNQDPIIAMYCTGGIRCEKSTAFMKNLGFNKVYHLKGGILEYFKSTKNTNNLWEGDCFTFDDRIVVDDNLVPGRVKCVSCDVHVTREEMKSVTRGNVLCFNCREVAKV</sequence>
<gene>
    <name evidence="1" type="primary">trhO</name>
    <name type="ordered locus">Ecaj_0206</name>
</gene>
<accession>Q3YSP9</accession>
<comment type="function">
    <text evidence="1">Catalyzes oxygen-dependent 5-hydroxyuridine (ho5U) modification at position 34 in tRNAs.</text>
</comment>
<comment type="catalytic activity">
    <reaction evidence="1">
        <text>uridine(34) in tRNA + AH2 + O2 = 5-hydroxyuridine(34) in tRNA + A + H2O</text>
        <dbReference type="Rhea" id="RHEA:64224"/>
        <dbReference type="Rhea" id="RHEA-COMP:11727"/>
        <dbReference type="Rhea" id="RHEA-COMP:13381"/>
        <dbReference type="ChEBI" id="CHEBI:13193"/>
        <dbReference type="ChEBI" id="CHEBI:15377"/>
        <dbReference type="ChEBI" id="CHEBI:15379"/>
        <dbReference type="ChEBI" id="CHEBI:17499"/>
        <dbReference type="ChEBI" id="CHEBI:65315"/>
        <dbReference type="ChEBI" id="CHEBI:136877"/>
    </reaction>
</comment>
<comment type="similarity">
    <text evidence="1">Belongs to the TrhO family.</text>
</comment>
<name>TRHO_EHRCJ</name>